<sequence length="240" mass="25980">MEQPKYKRVVLKLSGEALAGKQGFGIQPAVIQSIAKQVKEVAELDVEIAIVVGGGNIWRGKTGSEMGMDRATADYMGMLATVMNALALQDSLEQLGVETRVQTSIEMRQVAEPYIRRRAIRHLEKKRVVIFAAGTGNPYFSTDTTAALRAAEIEADVILMAKNNVDGVYSADPNIDASAVKYDELSYLDVIQQGLGVMDSTASSLCMDNNIPLIVFSITEEGNIKRAVLGENIGTIVRGK</sequence>
<accession>A4IMC5</accession>
<protein>
    <recommendedName>
        <fullName evidence="1">Uridylate kinase</fullName>
        <shortName evidence="1">UK</shortName>
        <ecNumber evidence="1">2.7.4.22</ecNumber>
    </recommendedName>
    <alternativeName>
        <fullName evidence="1">Uridine monophosphate kinase</fullName>
        <shortName evidence="1">UMP kinase</shortName>
        <shortName evidence="1">UMPK</shortName>
    </alternativeName>
</protein>
<evidence type="ECO:0000255" key="1">
    <source>
        <dbReference type="HAMAP-Rule" id="MF_01220"/>
    </source>
</evidence>
<evidence type="ECO:0000305" key="2"/>
<reference key="1">
    <citation type="journal article" date="2007" name="Proc. Natl. Acad. Sci. U.S.A.">
        <title>Genome and proteome of long-chain alkane degrading Geobacillus thermodenitrificans NG80-2 isolated from a deep-subsurface oil reservoir.</title>
        <authorList>
            <person name="Feng L."/>
            <person name="Wang W."/>
            <person name="Cheng J."/>
            <person name="Ren Y."/>
            <person name="Zhao G."/>
            <person name="Gao C."/>
            <person name="Tang Y."/>
            <person name="Liu X."/>
            <person name="Han W."/>
            <person name="Peng X."/>
            <person name="Liu R."/>
            <person name="Wang L."/>
        </authorList>
    </citation>
    <scope>NUCLEOTIDE SEQUENCE [LARGE SCALE GENOMIC DNA]</scope>
    <source>
        <strain>NG80-2</strain>
    </source>
</reference>
<proteinExistence type="inferred from homology"/>
<name>PYRH_GEOTN</name>
<gene>
    <name evidence="1" type="primary">pyrH</name>
    <name type="synonym">smbA</name>
    <name type="ordered locus">GTNG_1105</name>
</gene>
<organism>
    <name type="scientific">Geobacillus thermodenitrificans (strain NG80-2)</name>
    <dbReference type="NCBI Taxonomy" id="420246"/>
    <lineage>
        <taxon>Bacteria</taxon>
        <taxon>Bacillati</taxon>
        <taxon>Bacillota</taxon>
        <taxon>Bacilli</taxon>
        <taxon>Bacillales</taxon>
        <taxon>Anoxybacillaceae</taxon>
        <taxon>Geobacillus</taxon>
    </lineage>
</organism>
<dbReference type="EC" id="2.7.4.22" evidence="1"/>
<dbReference type="EMBL" id="CP000557">
    <property type="protein sequence ID" value="ABO66479.1"/>
    <property type="status" value="ALT_INIT"/>
    <property type="molecule type" value="Genomic_DNA"/>
</dbReference>
<dbReference type="RefSeq" id="WP_008878557.1">
    <property type="nucleotide sequence ID" value="NC_009328.1"/>
</dbReference>
<dbReference type="SMR" id="A4IMC5"/>
<dbReference type="GeneID" id="87621303"/>
<dbReference type="KEGG" id="gtn:GTNG_1105"/>
<dbReference type="eggNOG" id="COG0528">
    <property type="taxonomic scope" value="Bacteria"/>
</dbReference>
<dbReference type="HOGENOM" id="CLU_033861_0_0_9"/>
<dbReference type="UniPathway" id="UPA00159">
    <property type="reaction ID" value="UER00275"/>
</dbReference>
<dbReference type="Proteomes" id="UP000001578">
    <property type="component" value="Chromosome"/>
</dbReference>
<dbReference type="GO" id="GO:0005737">
    <property type="term" value="C:cytoplasm"/>
    <property type="evidence" value="ECO:0007669"/>
    <property type="project" value="UniProtKB-SubCell"/>
</dbReference>
<dbReference type="GO" id="GO:0005524">
    <property type="term" value="F:ATP binding"/>
    <property type="evidence" value="ECO:0007669"/>
    <property type="project" value="UniProtKB-KW"/>
</dbReference>
<dbReference type="GO" id="GO:0033862">
    <property type="term" value="F:UMP kinase activity"/>
    <property type="evidence" value="ECO:0007669"/>
    <property type="project" value="UniProtKB-EC"/>
</dbReference>
<dbReference type="GO" id="GO:0044210">
    <property type="term" value="P:'de novo' CTP biosynthetic process"/>
    <property type="evidence" value="ECO:0007669"/>
    <property type="project" value="UniProtKB-UniRule"/>
</dbReference>
<dbReference type="GO" id="GO:0006225">
    <property type="term" value="P:UDP biosynthetic process"/>
    <property type="evidence" value="ECO:0007669"/>
    <property type="project" value="TreeGrafter"/>
</dbReference>
<dbReference type="CDD" id="cd04254">
    <property type="entry name" value="AAK_UMPK-PyrH-Ec"/>
    <property type="match status" value="1"/>
</dbReference>
<dbReference type="FunFam" id="3.40.1160.10:FF:000001">
    <property type="entry name" value="Uridylate kinase"/>
    <property type="match status" value="1"/>
</dbReference>
<dbReference type="Gene3D" id="3.40.1160.10">
    <property type="entry name" value="Acetylglutamate kinase-like"/>
    <property type="match status" value="1"/>
</dbReference>
<dbReference type="HAMAP" id="MF_01220_B">
    <property type="entry name" value="PyrH_B"/>
    <property type="match status" value="1"/>
</dbReference>
<dbReference type="InterPro" id="IPR036393">
    <property type="entry name" value="AceGlu_kinase-like_sf"/>
</dbReference>
<dbReference type="InterPro" id="IPR001048">
    <property type="entry name" value="Asp/Glu/Uridylate_kinase"/>
</dbReference>
<dbReference type="InterPro" id="IPR011817">
    <property type="entry name" value="Uridylate_kinase"/>
</dbReference>
<dbReference type="InterPro" id="IPR015963">
    <property type="entry name" value="Uridylate_kinase_bac"/>
</dbReference>
<dbReference type="NCBIfam" id="TIGR02075">
    <property type="entry name" value="pyrH_bact"/>
    <property type="match status" value="1"/>
</dbReference>
<dbReference type="PANTHER" id="PTHR42833">
    <property type="entry name" value="URIDYLATE KINASE"/>
    <property type="match status" value="1"/>
</dbReference>
<dbReference type="PANTHER" id="PTHR42833:SF4">
    <property type="entry name" value="URIDYLATE KINASE PUMPKIN, CHLOROPLASTIC"/>
    <property type="match status" value="1"/>
</dbReference>
<dbReference type="Pfam" id="PF00696">
    <property type="entry name" value="AA_kinase"/>
    <property type="match status" value="1"/>
</dbReference>
<dbReference type="PIRSF" id="PIRSF005650">
    <property type="entry name" value="Uridylate_kin"/>
    <property type="match status" value="1"/>
</dbReference>
<dbReference type="SUPFAM" id="SSF53633">
    <property type="entry name" value="Carbamate kinase-like"/>
    <property type="match status" value="1"/>
</dbReference>
<feature type="chain" id="PRO_0000323856" description="Uridylate kinase">
    <location>
        <begin position="1"/>
        <end position="240"/>
    </location>
</feature>
<feature type="region of interest" description="Involved in allosteric activation by GTP" evidence="1">
    <location>
        <begin position="20"/>
        <end position="25"/>
    </location>
</feature>
<feature type="binding site" evidence="1">
    <location>
        <begin position="12"/>
        <end position="15"/>
    </location>
    <ligand>
        <name>ATP</name>
        <dbReference type="ChEBI" id="CHEBI:30616"/>
    </ligand>
</feature>
<feature type="binding site" evidence="1">
    <location>
        <position position="54"/>
    </location>
    <ligand>
        <name>UMP</name>
        <dbReference type="ChEBI" id="CHEBI:57865"/>
    </ligand>
</feature>
<feature type="binding site" evidence="1">
    <location>
        <position position="55"/>
    </location>
    <ligand>
        <name>ATP</name>
        <dbReference type="ChEBI" id="CHEBI:30616"/>
    </ligand>
</feature>
<feature type="binding site" evidence="1">
    <location>
        <position position="59"/>
    </location>
    <ligand>
        <name>ATP</name>
        <dbReference type="ChEBI" id="CHEBI:30616"/>
    </ligand>
</feature>
<feature type="binding site" evidence="1">
    <location>
        <position position="74"/>
    </location>
    <ligand>
        <name>UMP</name>
        <dbReference type="ChEBI" id="CHEBI:57865"/>
    </ligand>
</feature>
<feature type="binding site" evidence="1">
    <location>
        <begin position="135"/>
        <end position="142"/>
    </location>
    <ligand>
        <name>UMP</name>
        <dbReference type="ChEBI" id="CHEBI:57865"/>
    </ligand>
</feature>
<feature type="binding site" evidence="1">
    <location>
        <position position="163"/>
    </location>
    <ligand>
        <name>ATP</name>
        <dbReference type="ChEBI" id="CHEBI:30616"/>
    </ligand>
</feature>
<feature type="binding site" evidence="1">
    <location>
        <position position="169"/>
    </location>
    <ligand>
        <name>ATP</name>
        <dbReference type="ChEBI" id="CHEBI:30616"/>
    </ligand>
</feature>
<feature type="binding site" evidence="1">
    <location>
        <position position="172"/>
    </location>
    <ligand>
        <name>ATP</name>
        <dbReference type="ChEBI" id="CHEBI:30616"/>
    </ligand>
</feature>
<comment type="function">
    <text evidence="1">Catalyzes the reversible phosphorylation of UMP to UDP.</text>
</comment>
<comment type="catalytic activity">
    <reaction evidence="1">
        <text>UMP + ATP = UDP + ADP</text>
        <dbReference type="Rhea" id="RHEA:24400"/>
        <dbReference type="ChEBI" id="CHEBI:30616"/>
        <dbReference type="ChEBI" id="CHEBI:57865"/>
        <dbReference type="ChEBI" id="CHEBI:58223"/>
        <dbReference type="ChEBI" id="CHEBI:456216"/>
        <dbReference type="EC" id="2.7.4.22"/>
    </reaction>
</comment>
<comment type="activity regulation">
    <text evidence="1">Allosterically activated by GTP. Inhibited by UTP.</text>
</comment>
<comment type="pathway">
    <text evidence="1">Pyrimidine metabolism; CTP biosynthesis via de novo pathway; UDP from UMP (UMPK route): step 1/1.</text>
</comment>
<comment type="subunit">
    <text evidence="1">Homohexamer.</text>
</comment>
<comment type="subcellular location">
    <subcellularLocation>
        <location evidence="1">Cytoplasm</location>
    </subcellularLocation>
</comment>
<comment type="similarity">
    <text evidence="1">Belongs to the UMP kinase family.</text>
</comment>
<comment type="sequence caution" evidence="2">
    <conflict type="erroneous initiation">
        <sequence resource="EMBL-CDS" id="ABO66479"/>
    </conflict>
</comment>
<keyword id="KW-0021">Allosteric enzyme</keyword>
<keyword id="KW-0067">ATP-binding</keyword>
<keyword id="KW-0963">Cytoplasm</keyword>
<keyword id="KW-0418">Kinase</keyword>
<keyword id="KW-0547">Nucleotide-binding</keyword>
<keyword id="KW-0665">Pyrimidine biosynthesis</keyword>
<keyword id="KW-0808">Transferase</keyword>